<sequence>MSLSDIQQAILSLITNHINADGVSPSQTEIARAFGFKGVRAVQHHLDVLEQQGMIRRVPGQARGIRLKHLTQVDEAALALQSEDVLRLPVLGRVAAGQPIGADIGEDRVVLLDRVFFSPAPDYLLRVQGDSMRDEGIFDGDLIGVHRTHDAHSGQIVVARIDDEITVKLLKISKDRIRLLPRNPDFAPIEVRSDQDFAIEGLYCGLLRPNR</sequence>
<name>LEXA_XYLFM</name>
<organism>
    <name type="scientific">Xylella fastidiosa (strain M12)</name>
    <dbReference type="NCBI Taxonomy" id="405440"/>
    <lineage>
        <taxon>Bacteria</taxon>
        <taxon>Pseudomonadati</taxon>
        <taxon>Pseudomonadota</taxon>
        <taxon>Gammaproteobacteria</taxon>
        <taxon>Lysobacterales</taxon>
        <taxon>Lysobacteraceae</taxon>
        <taxon>Xylella</taxon>
    </lineage>
</organism>
<protein>
    <recommendedName>
        <fullName evidence="1">LexA repressor</fullName>
        <ecNumber evidence="1">3.4.21.88</ecNumber>
    </recommendedName>
</protein>
<dbReference type="EC" id="3.4.21.88" evidence="1"/>
<dbReference type="EMBL" id="CP000941">
    <property type="protein sequence ID" value="ACA11139.1"/>
    <property type="molecule type" value="Genomic_DNA"/>
</dbReference>
<dbReference type="RefSeq" id="WP_004085532.1">
    <property type="nucleotide sequence ID" value="NC_010513.1"/>
</dbReference>
<dbReference type="SMR" id="B0U1K7"/>
<dbReference type="MEROPS" id="S24.001"/>
<dbReference type="KEGG" id="xfm:Xfasm12_0099"/>
<dbReference type="HOGENOM" id="CLU_066192_45_3_6"/>
<dbReference type="GO" id="GO:0003677">
    <property type="term" value="F:DNA binding"/>
    <property type="evidence" value="ECO:0007669"/>
    <property type="project" value="UniProtKB-UniRule"/>
</dbReference>
<dbReference type="GO" id="GO:0004252">
    <property type="term" value="F:serine-type endopeptidase activity"/>
    <property type="evidence" value="ECO:0007669"/>
    <property type="project" value="UniProtKB-UniRule"/>
</dbReference>
<dbReference type="GO" id="GO:0006281">
    <property type="term" value="P:DNA repair"/>
    <property type="evidence" value="ECO:0007669"/>
    <property type="project" value="UniProtKB-UniRule"/>
</dbReference>
<dbReference type="GO" id="GO:0006260">
    <property type="term" value="P:DNA replication"/>
    <property type="evidence" value="ECO:0007669"/>
    <property type="project" value="UniProtKB-UniRule"/>
</dbReference>
<dbReference type="GO" id="GO:0045892">
    <property type="term" value="P:negative regulation of DNA-templated transcription"/>
    <property type="evidence" value="ECO:0007669"/>
    <property type="project" value="UniProtKB-UniRule"/>
</dbReference>
<dbReference type="GO" id="GO:0006508">
    <property type="term" value="P:proteolysis"/>
    <property type="evidence" value="ECO:0007669"/>
    <property type="project" value="InterPro"/>
</dbReference>
<dbReference type="GO" id="GO:0009432">
    <property type="term" value="P:SOS response"/>
    <property type="evidence" value="ECO:0007669"/>
    <property type="project" value="UniProtKB-UniRule"/>
</dbReference>
<dbReference type="CDD" id="cd06529">
    <property type="entry name" value="S24_LexA-like"/>
    <property type="match status" value="1"/>
</dbReference>
<dbReference type="FunFam" id="1.10.10.10:FF:000009">
    <property type="entry name" value="LexA repressor"/>
    <property type="match status" value="1"/>
</dbReference>
<dbReference type="FunFam" id="2.10.109.10:FF:000001">
    <property type="entry name" value="LexA repressor"/>
    <property type="match status" value="1"/>
</dbReference>
<dbReference type="Gene3D" id="2.10.109.10">
    <property type="entry name" value="Umud Fragment, subunit A"/>
    <property type="match status" value="1"/>
</dbReference>
<dbReference type="Gene3D" id="1.10.10.10">
    <property type="entry name" value="Winged helix-like DNA-binding domain superfamily/Winged helix DNA-binding domain"/>
    <property type="match status" value="1"/>
</dbReference>
<dbReference type="HAMAP" id="MF_00015">
    <property type="entry name" value="LexA"/>
    <property type="match status" value="1"/>
</dbReference>
<dbReference type="InterPro" id="IPR006200">
    <property type="entry name" value="LexA"/>
</dbReference>
<dbReference type="InterPro" id="IPR039418">
    <property type="entry name" value="LexA-like"/>
</dbReference>
<dbReference type="InterPro" id="IPR036286">
    <property type="entry name" value="LexA/Signal_pep-like_sf"/>
</dbReference>
<dbReference type="InterPro" id="IPR006199">
    <property type="entry name" value="LexA_DNA-bd_dom"/>
</dbReference>
<dbReference type="InterPro" id="IPR050077">
    <property type="entry name" value="LexA_repressor"/>
</dbReference>
<dbReference type="InterPro" id="IPR006197">
    <property type="entry name" value="Peptidase_S24_LexA"/>
</dbReference>
<dbReference type="InterPro" id="IPR015927">
    <property type="entry name" value="Peptidase_S24_S26A/B/C"/>
</dbReference>
<dbReference type="InterPro" id="IPR036388">
    <property type="entry name" value="WH-like_DNA-bd_sf"/>
</dbReference>
<dbReference type="InterPro" id="IPR036390">
    <property type="entry name" value="WH_DNA-bd_sf"/>
</dbReference>
<dbReference type="NCBIfam" id="TIGR00498">
    <property type="entry name" value="lexA"/>
    <property type="match status" value="1"/>
</dbReference>
<dbReference type="PANTHER" id="PTHR33516">
    <property type="entry name" value="LEXA REPRESSOR"/>
    <property type="match status" value="1"/>
</dbReference>
<dbReference type="PANTHER" id="PTHR33516:SF2">
    <property type="entry name" value="LEXA REPRESSOR-RELATED"/>
    <property type="match status" value="1"/>
</dbReference>
<dbReference type="Pfam" id="PF01726">
    <property type="entry name" value="LexA_DNA_bind"/>
    <property type="match status" value="1"/>
</dbReference>
<dbReference type="Pfam" id="PF00717">
    <property type="entry name" value="Peptidase_S24"/>
    <property type="match status" value="1"/>
</dbReference>
<dbReference type="PRINTS" id="PR00726">
    <property type="entry name" value="LEXASERPTASE"/>
</dbReference>
<dbReference type="SUPFAM" id="SSF51306">
    <property type="entry name" value="LexA/Signal peptidase"/>
    <property type="match status" value="1"/>
</dbReference>
<dbReference type="SUPFAM" id="SSF46785">
    <property type="entry name" value="Winged helix' DNA-binding domain"/>
    <property type="match status" value="1"/>
</dbReference>
<evidence type="ECO:0000255" key="1">
    <source>
        <dbReference type="HAMAP-Rule" id="MF_00015"/>
    </source>
</evidence>
<reference key="1">
    <citation type="journal article" date="2010" name="J. Bacteriol.">
        <title>Whole genome sequences of two Xylella fastidiosa strains (M12 and M23) causing almond leaf scorch disease in California.</title>
        <authorList>
            <person name="Chen J."/>
            <person name="Xie G."/>
            <person name="Han S."/>
            <person name="Chertkov O."/>
            <person name="Sims D."/>
            <person name="Civerolo E.L."/>
        </authorList>
    </citation>
    <scope>NUCLEOTIDE SEQUENCE [LARGE SCALE GENOMIC DNA]</scope>
    <source>
        <strain>M12</strain>
    </source>
</reference>
<proteinExistence type="inferred from homology"/>
<feature type="chain" id="PRO_1000089605" description="LexA repressor">
    <location>
        <begin position="1"/>
        <end position="211"/>
    </location>
</feature>
<feature type="DNA-binding region" description="H-T-H motif" evidence="1">
    <location>
        <begin position="27"/>
        <end position="47"/>
    </location>
</feature>
<feature type="active site" description="For autocatalytic cleavage activity" evidence="1">
    <location>
        <position position="131"/>
    </location>
</feature>
<feature type="active site" description="For autocatalytic cleavage activity" evidence="1">
    <location>
        <position position="168"/>
    </location>
</feature>
<feature type="site" description="Cleavage; by autolysis" evidence="1">
    <location>
        <begin position="96"/>
        <end position="97"/>
    </location>
</feature>
<comment type="function">
    <text evidence="1">Represses a number of genes involved in the response to DNA damage (SOS response), including recA and lexA. In the presence of single-stranded DNA, RecA interacts with LexA causing an autocatalytic cleavage which disrupts the DNA-binding part of LexA, leading to derepression of the SOS regulon and eventually DNA repair.</text>
</comment>
<comment type="catalytic activity">
    <reaction evidence="1">
        <text>Hydrolysis of Ala-|-Gly bond in repressor LexA.</text>
        <dbReference type="EC" id="3.4.21.88"/>
    </reaction>
</comment>
<comment type="subunit">
    <text evidence="1">Homodimer.</text>
</comment>
<comment type="similarity">
    <text evidence="1">Belongs to the peptidase S24 family.</text>
</comment>
<keyword id="KW-0068">Autocatalytic cleavage</keyword>
<keyword id="KW-0227">DNA damage</keyword>
<keyword id="KW-0234">DNA repair</keyword>
<keyword id="KW-0235">DNA replication</keyword>
<keyword id="KW-0238">DNA-binding</keyword>
<keyword id="KW-0378">Hydrolase</keyword>
<keyword id="KW-0678">Repressor</keyword>
<keyword id="KW-0742">SOS response</keyword>
<keyword id="KW-0804">Transcription</keyword>
<keyword id="KW-0805">Transcription regulation</keyword>
<gene>
    <name evidence="1" type="primary">lexA</name>
    <name type="ordered locus">Xfasm12_0099</name>
</gene>
<accession>B0U1K7</accession>